<sequence length="609" mass="67401">MGESERSEAFGIPRDSPLSSGDAAELEQLRREAAVLREQLENAVGSHAPTRSARDIHQLEARIDSLAARNSKLMETLKEARQQLLALREEVDRLGQPPSGYGVLLATHDDDTVDVFTSGRKMRLTCSPNIDAASLKKGQTVRLNEALTVVEAGTFEAVGEISTLREILADGHRALVVGHADEERVVWLADPLIAEDLPDGLPEALNDDTRPRKLRPGDSLLVDTKAGYAFERIPKAEVEDLVLEEVPDVSYADIGGLSRQIEQIRDAVELPFLHKELYREYSLRPPKGVLLYGPPGCGKTLIAKAVANSLAKKMAEVRGDDAHEAKSYFLNIKGPELLNKFVGETERHIRLIFQRAREKASEGTPVIVFFDEMDSIFRTRGTGVSSDVETTVVPQLLSEIDGVEGLENVIVIGASNREDMIDPAILRPGRLDVKIKIERPDAEAAQDIYSKYLTEFLPVHADDLAEFDGDRSACIKAMIEKVVDRMYAEIDDNRFLEVTYANGDKEVMYFKDFNSGAMIQNVVDRAKKNAIKSVLETGQPGLRIQHLLDSIVDEFAENEDLPNTTNPDDWARISGKKGERIVYIRTLVTGKSSSASRAIDTESNLGQYL</sequence>
<gene>
    <name evidence="1" type="primary">mpa</name>
    <name type="ordered locus">BCG_2132c</name>
</gene>
<reference key="1">
    <citation type="journal article" date="2007" name="Proc. Natl. Acad. Sci. U.S.A.">
        <title>Genome plasticity of BCG and impact on vaccine efficacy.</title>
        <authorList>
            <person name="Brosch R."/>
            <person name="Gordon S.V."/>
            <person name="Garnier T."/>
            <person name="Eiglmeier K."/>
            <person name="Frigui W."/>
            <person name="Valenti P."/>
            <person name="Dos Santos S."/>
            <person name="Duthoy S."/>
            <person name="Lacroix C."/>
            <person name="Garcia-Pelayo C."/>
            <person name="Inwald J.K."/>
            <person name="Golby P."/>
            <person name="Garcia J.N."/>
            <person name="Hewinson R.G."/>
            <person name="Behr M.A."/>
            <person name="Quail M.A."/>
            <person name="Churcher C."/>
            <person name="Barrell B.G."/>
            <person name="Parkhill J."/>
            <person name="Cole S.T."/>
        </authorList>
    </citation>
    <scope>NUCLEOTIDE SEQUENCE [LARGE SCALE GENOMIC DNA]</scope>
    <source>
        <strain>BCG / Pasteur 1173P2</strain>
    </source>
</reference>
<organism>
    <name type="scientific">Mycobacterium bovis (strain BCG / Pasteur 1173P2)</name>
    <dbReference type="NCBI Taxonomy" id="410289"/>
    <lineage>
        <taxon>Bacteria</taxon>
        <taxon>Bacillati</taxon>
        <taxon>Actinomycetota</taxon>
        <taxon>Actinomycetes</taxon>
        <taxon>Mycobacteriales</taxon>
        <taxon>Mycobacteriaceae</taxon>
        <taxon>Mycobacterium</taxon>
        <taxon>Mycobacterium tuberculosis complex</taxon>
    </lineage>
</organism>
<comment type="function">
    <text evidence="1">ATPase which is responsible for recognizing, binding, unfolding and translocation of pupylated proteins into the bacterial 20S proteasome core particle. May be essential for opening the gate of the 20S proteasome via an interaction with its C-terminus, thereby allowing substrate entry and access to the site of proteolysis. Thus, the C-termini of the proteasomal ATPase may function like a 'key in a lock' to induce gate opening and therefore regulate proteolysis.</text>
</comment>
<comment type="pathway">
    <text evidence="1">Protein degradation; proteasomal Pup-dependent pathway.</text>
</comment>
<comment type="subunit">
    <text evidence="1">Homohexamer. Assembles into a hexameric ring structure that caps the 20S proteasome core. Strongly interacts with the prokaryotic ubiquitin-like protein Pup through a hydrophobic interface; the interacting region of ARC lies in its N-terminal coiled-coil domain. There is one Pup binding site per ARC hexamer ring. Upon ATP-binding, the C-terminus of ARC interacts with the alpha-rings of the proteasome core, possibly by binding to the intersubunit pockets.</text>
</comment>
<comment type="domain">
    <text evidence="1">Consists of three main regions, an N-terminal coiled-coil domain that binds to protein Pup and functions as a docking station, an interdomain involved in ARC hexamerization, and a C-terminal ATPase domain of the AAA type.</text>
</comment>
<comment type="similarity">
    <text evidence="1">Belongs to the AAA ATPase family.</text>
</comment>
<protein>
    <recommendedName>
        <fullName evidence="1">Proteasome-associated ATPase</fullName>
    </recommendedName>
    <alternativeName>
        <fullName evidence="1">AAA ATPase forming ring-shaped complexes</fullName>
        <shortName evidence="1">ARC</shortName>
    </alternativeName>
    <alternativeName>
        <fullName evidence="1">Mycobacterial proteasome ATPase</fullName>
    </alternativeName>
</protein>
<evidence type="ECO:0000255" key="1">
    <source>
        <dbReference type="HAMAP-Rule" id="MF_02112"/>
    </source>
</evidence>
<evidence type="ECO:0000256" key="2">
    <source>
        <dbReference type="SAM" id="MobiDB-lite"/>
    </source>
</evidence>
<name>ARC_MYCBP</name>
<keyword id="KW-0067">ATP-binding</keyword>
<keyword id="KW-0143">Chaperone</keyword>
<keyword id="KW-0175">Coiled coil</keyword>
<keyword id="KW-0547">Nucleotide-binding</keyword>
<keyword id="KW-0647">Proteasome</keyword>
<feature type="chain" id="PRO_0000396994" description="Proteasome-associated ATPase">
    <location>
        <begin position="1"/>
        <end position="609"/>
    </location>
</feature>
<feature type="region of interest" description="Disordered" evidence="2">
    <location>
        <begin position="1"/>
        <end position="24"/>
    </location>
</feature>
<feature type="region of interest" description="Docks into pockets in the proteasome alpha-ring" evidence="1">
    <location>
        <begin position="608"/>
        <end position="609"/>
    </location>
</feature>
<feature type="coiled-coil region" evidence="1">
    <location>
        <begin position="20"/>
        <end position="96"/>
    </location>
</feature>
<feature type="binding site" evidence="1">
    <location>
        <begin position="296"/>
        <end position="301"/>
    </location>
    <ligand>
        <name>ATP</name>
        <dbReference type="ChEBI" id="CHEBI:30616"/>
    </ligand>
</feature>
<accession>A1KKF8</accession>
<dbReference type="EMBL" id="AM408590">
    <property type="protein sequence ID" value="CAL72120.1"/>
    <property type="molecule type" value="Genomic_DNA"/>
</dbReference>
<dbReference type="EMDB" id="EMD-27223"/>
<dbReference type="EMDB" id="EMD-27224"/>
<dbReference type="EMDB" id="EMD-27225"/>
<dbReference type="EMDB" id="EMD-27226"/>
<dbReference type="SMR" id="A1KKF8"/>
<dbReference type="KEGG" id="mbb:BCG_2132c"/>
<dbReference type="HOGENOM" id="CLU_036054_0_0_11"/>
<dbReference type="UniPathway" id="UPA00997"/>
<dbReference type="Proteomes" id="UP000001472">
    <property type="component" value="Chromosome"/>
</dbReference>
<dbReference type="GO" id="GO:0000502">
    <property type="term" value="C:proteasome complex"/>
    <property type="evidence" value="ECO:0007669"/>
    <property type="project" value="UniProtKB-KW"/>
</dbReference>
<dbReference type="GO" id="GO:0005524">
    <property type="term" value="F:ATP binding"/>
    <property type="evidence" value="ECO:0007669"/>
    <property type="project" value="UniProtKB-UniRule"/>
</dbReference>
<dbReference type="GO" id="GO:0016887">
    <property type="term" value="F:ATP hydrolysis activity"/>
    <property type="evidence" value="ECO:0007669"/>
    <property type="project" value="UniProtKB-UniRule"/>
</dbReference>
<dbReference type="GO" id="GO:0019941">
    <property type="term" value="P:modification-dependent protein catabolic process"/>
    <property type="evidence" value="ECO:0007669"/>
    <property type="project" value="InterPro"/>
</dbReference>
<dbReference type="GO" id="GO:0010498">
    <property type="term" value="P:proteasomal protein catabolic process"/>
    <property type="evidence" value="ECO:0007669"/>
    <property type="project" value="InterPro"/>
</dbReference>
<dbReference type="FunFam" id="1.10.8.60:FF:000122">
    <property type="entry name" value="AAA ATPase forming ring-shaped complexes"/>
    <property type="match status" value="1"/>
</dbReference>
<dbReference type="FunFam" id="1.20.5.170:FF:000018">
    <property type="entry name" value="AAA ATPase forming ring-shaped complexes"/>
    <property type="match status" value="1"/>
</dbReference>
<dbReference type="FunFam" id="2.40.50.140:FF:000169">
    <property type="entry name" value="AAA ATPase forming ring-shaped complexes"/>
    <property type="match status" value="1"/>
</dbReference>
<dbReference type="FunFam" id="3.40.50.300:FF:000155">
    <property type="entry name" value="AAA ATPase forming ring-shaped complexes"/>
    <property type="match status" value="1"/>
</dbReference>
<dbReference type="Gene3D" id="1.10.8.60">
    <property type="match status" value="1"/>
</dbReference>
<dbReference type="Gene3D" id="1.20.5.170">
    <property type="match status" value="1"/>
</dbReference>
<dbReference type="Gene3D" id="2.40.50.140">
    <property type="entry name" value="Nucleic acid-binding proteins"/>
    <property type="match status" value="2"/>
</dbReference>
<dbReference type="Gene3D" id="3.40.50.300">
    <property type="entry name" value="P-loop containing nucleotide triphosphate hydrolases"/>
    <property type="match status" value="1"/>
</dbReference>
<dbReference type="HAMAP" id="MF_02112">
    <property type="entry name" value="ARC_ATPase"/>
    <property type="match status" value="1"/>
</dbReference>
<dbReference type="InterPro" id="IPR003593">
    <property type="entry name" value="AAA+_ATPase"/>
</dbReference>
<dbReference type="InterPro" id="IPR050168">
    <property type="entry name" value="AAA_ATPase_domain"/>
</dbReference>
<dbReference type="InterPro" id="IPR003959">
    <property type="entry name" value="ATPase_AAA_core"/>
</dbReference>
<dbReference type="InterPro" id="IPR003960">
    <property type="entry name" value="ATPase_AAA_CS"/>
</dbReference>
<dbReference type="InterPro" id="IPR012340">
    <property type="entry name" value="NA-bd_OB-fold"/>
</dbReference>
<dbReference type="InterPro" id="IPR027417">
    <property type="entry name" value="P-loop_NTPase"/>
</dbReference>
<dbReference type="InterPro" id="IPR032501">
    <property type="entry name" value="Prot_ATP_ID_OB_2nd"/>
</dbReference>
<dbReference type="InterPro" id="IPR041626">
    <property type="entry name" value="Prot_ATP_ID_OB_N"/>
</dbReference>
<dbReference type="InterPro" id="IPR022482">
    <property type="entry name" value="Proteasome_ATPase"/>
</dbReference>
<dbReference type="NCBIfam" id="TIGR03689">
    <property type="entry name" value="pup_AAA"/>
    <property type="match status" value="1"/>
</dbReference>
<dbReference type="PANTHER" id="PTHR23077">
    <property type="entry name" value="AAA-FAMILY ATPASE"/>
    <property type="match status" value="1"/>
</dbReference>
<dbReference type="PANTHER" id="PTHR23077:SF144">
    <property type="entry name" value="PROTEASOME-ASSOCIATED ATPASE"/>
    <property type="match status" value="1"/>
</dbReference>
<dbReference type="Pfam" id="PF00004">
    <property type="entry name" value="AAA"/>
    <property type="match status" value="1"/>
</dbReference>
<dbReference type="Pfam" id="PF16450">
    <property type="entry name" value="Prot_ATP_ID_OB_C"/>
    <property type="match status" value="1"/>
</dbReference>
<dbReference type="Pfam" id="PF17758">
    <property type="entry name" value="Prot_ATP_ID_OB_N"/>
    <property type="match status" value="1"/>
</dbReference>
<dbReference type="SMART" id="SM00382">
    <property type="entry name" value="AAA"/>
    <property type="match status" value="1"/>
</dbReference>
<dbReference type="SUPFAM" id="SSF52540">
    <property type="entry name" value="P-loop containing nucleoside triphosphate hydrolases"/>
    <property type="match status" value="1"/>
</dbReference>
<dbReference type="PROSITE" id="PS00674">
    <property type="entry name" value="AAA"/>
    <property type="match status" value="1"/>
</dbReference>
<proteinExistence type="inferred from homology"/>